<name>URE23_HELPY</name>
<accession>P14916</accession>
<protein>
    <recommendedName>
        <fullName evidence="1">Urease subunit alpha</fullName>
        <ecNumber evidence="1">3.5.1.5</ecNumber>
    </recommendedName>
    <alternativeName>
        <fullName evidence="1">Urea amidohydrolase subunit alpha</fullName>
    </alternativeName>
</protein>
<gene>
    <name evidence="1" type="primary">ureA</name>
    <name type="synonym">hpuA</name>
    <name type="ordered locus">HP_0073</name>
</gene>
<sequence length="238" mass="26540">MKLTPKELDKLMLHYAGELAKKRKEKGIKLNYVEAVALISAHIMEEARAGKKTAAELMQEGRTLLKPDDVMDGVASMIHEVGIEAMFPDGTKLVTVHTPIEANGKLVPGELFLKNEDITINEGKKAVSVKVKNVGDRPVQIGSHFHFFEVNRCLDFDREKTFGKRLDIASGTAVRFEPGEEKSVELIDIGGNRRIFGFNALVDRQADNESKKIALHRAKERGFHGAKSDDNYVKTIKE</sequence>
<evidence type="ECO:0000255" key="1">
    <source>
        <dbReference type="HAMAP-Rule" id="MF_01955"/>
    </source>
</evidence>
<evidence type="ECO:0000269" key="2">
    <source>
    </source>
</evidence>
<evidence type="ECO:0000269" key="3">
    <source>
    </source>
</evidence>
<evidence type="ECO:0000269" key="4">
    <source>
    </source>
</evidence>
<evidence type="ECO:0000269" key="5">
    <source>
    </source>
</evidence>
<evidence type="ECO:0000269" key="6">
    <source>
    </source>
</evidence>
<evidence type="ECO:0000269" key="7">
    <source>
    </source>
</evidence>
<evidence type="ECO:0000269" key="8">
    <source>
    </source>
</evidence>
<evidence type="ECO:0000305" key="9"/>
<evidence type="ECO:0007829" key="10">
    <source>
        <dbReference type="PDB" id="6ZJA"/>
    </source>
</evidence>
<dbReference type="EC" id="3.5.1.5" evidence="1"/>
<dbReference type="EMBL" id="X17079">
    <property type="protein sequence ID" value="CAA34932.1"/>
    <property type="molecule type" value="Genomic_DNA"/>
</dbReference>
<dbReference type="EMBL" id="M60398">
    <property type="protein sequence ID" value="AAA25020.1"/>
    <property type="molecule type" value="Genomic_DNA"/>
</dbReference>
<dbReference type="EMBL" id="AB032429">
    <property type="protein sequence ID" value="BAA84532.1"/>
    <property type="molecule type" value="Genomic_DNA"/>
</dbReference>
<dbReference type="EMBL" id="AE000511">
    <property type="protein sequence ID" value="AAD07144.1"/>
    <property type="molecule type" value="Genomic_DNA"/>
</dbReference>
<dbReference type="PIR" id="A38537">
    <property type="entry name" value="URKCAP"/>
</dbReference>
<dbReference type="RefSeq" id="NP_206873.1">
    <property type="nucleotide sequence ID" value="NC_000915.1"/>
</dbReference>
<dbReference type="RefSeq" id="WP_000779223.1">
    <property type="nucleotide sequence ID" value="NC_018939.1"/>
</dbReference>
<dbReference type="PDB" id="1E9Y">
    <property type="method" value="X-ray"/>
    <property type="resolution" value="3.00 A"/>
    <property type="chains" value="A=1-238"/>
</dbReference>
<dbReference type="PDB" id="1E9Z">
    <property type="method" value="X-ray"/>
    <property type="resolution" value="3.00 A"/>
    <property type="chains" value="A=1-238"/>
</dbReference>
<dbReference type="PDB" id="6QSU">
    <property type="method" value="EM"/>
    <property type="resolution" value="2.40 A"/>
    <property type="chains" value="A/C/E/G/I/K/M/O/Q/S/U/W=1-238"/>
</dbReference>
<dbReference type="PDB" id="6ZJA">
    <property type="method" value="EM"/>
    <property type="resolution" value="2.00 A"/>
    <property type="chains" value="A/C/E/G/I/K/M/O/Q/S/U/W=1-238"/>
</dbReference>
<dbReference type="PDB" id="8HC1">
    <property type="method" value="EM"/>
    <property type="resolution" value="2.30 A"/>
    <property type="chains" value="A/E/I/M/Q/U/Y/c/g/k/o/s=1-238"/>
</dbReference>
<dbReference type="PDBsum" id="1E9Y"/>
<dbReference type="PDBsum" id="1E9Z"/>
<dbReference type="PDBsum" id="6QSU"/>
<dbReference type="PDBsum" id="6ZJA"/>
<dbReference type="PDBsum" id="8HC1"/>
<dbReference type="EMDB" id="EMD-11233"/>
<dbReference type="EMDB" id="EMD-34648"/>
<dbReference type="EMDB" id="EMD-4629"/>
<dbReference type="SMR" id="P14916"/>
<dbReference type="DIP" id="DIP-3146N"/>
<dbReference type="IntAct" id="P14916">
    <property type="interactions" value="7"/>
</dbReference>
<dbReference type="MINT" id="P14916"/>
<dbReference type="STRING" id="85962.HP_0073"/>
<dbReference type="BindingDB" id="P14916"/>
<dbReference type="ChEMBL" id="CHEMBL3885651"/>
<dbReference type="PaxDb" id="85962-C694_00355"/>
<dbReference type="DNASU" id="900171"/>
<dbReference type="EnsemblBacteria" id="AAD07144">
    <property type="protein sequence ID" value="AAD07144"/>
    <property type="gene ID" value="HP_0073"/>
</dbReference>
<dbReference type="KEGG" id="heo:C694_00355"/>
<dbReference type="KEGG" id="hpy:HP_0073"/>
<dbReference type="PATRIC" id="fig|85962.47.peg.77"/>
<dbReference type="eggNOG" id="COG0831">
    <property type="taxonomic scope" value="Bacteria"/>
</dbReference>
<dbReference type="eggNOG" id="COG0832">
    <property type="taxonomic scope" value="Bacteria"/>
</dbReference>
<dbReference type="InParanoid" id="P14916"/>
<dbReference type="OrthoDB" id="9797217at2"/>
<dbReference type="PhylomeDB" id="P14916"/>
<dbReference type="BioCyc" id="MetaCyc:HP_RS00370-MONOMER"/>
<dbReference type="BRENDA" id="3.5.1.5">
    <property type="organism ID" value="2604"/>
</dbReference>
<dbReference type="SABIO-RK" id="P14916"/>
<dbReference type="UniPathway" id="UPA00258">
    <property type="reaction ID" value="UER00370"/>
</dbReference>
<dbReference type="EvolutionaryTrace" id="P14916"/>
<dbReference type="PHI-base" id="PHI:7264"/>
<dbReference type="Proteomes" id="UP000000429">
    <property type="component" value="Chromosome"/>
</dbReference>
<dbReference type="GO" id="GO:0035550">
    <property type="term" value="C:urease complex"/>
    <property type="evidence" value="ECO:0007669"/>
    <property type="project" value="InterPro"/>
</dbReference>
<dbReference type="GO" id="GO:0016151">
    <property type="term" value="F:nickel cation binding"/>
    <property type="evidence" value="ECO:0007669"/>
    <property type="project" value="InterPro"/>
</dbReference>
<dbReference type="GO" id="GO:0009039">
    <property type="term" value="F:urease activity"/>
    <property type="evidence" value="ECO:0000318"/>
    <property type="project" value="GO_Central"/>
</dbReference>
<dbReference type="GO" id="GO:0043419">
    <property type="term" value="P:urea catabolic process"/>
    <property type="evidence" value="ECO:0000315"/>
    <property type="project" value="CACAO"/>
</dbReference>
<dbReference type="CDD" id="cd00407">
    <property type="entry name" value="Urease_beta"/>
    <property type="match status" value="1"/>
</dbReference>
<dbReference type="CDD" id="cd00390">
    <property type="entry name" value="Urease_gamma"/>
    <property type="match status" value="1"/>
</dbReference>
<dbReference type="FunFam" id="3.30.280.10:FF:000001">
    <property type="entry name" value="Urease subunit alpha"/>
    <property type="match status" value="1"/>
</dbReference>
<dbReference type="FunFam" id="2.10.150.10:FF:000001">
    <property type="entry name" value="Urease subunit beta"/>
    <property type="match status" value="1"/>
</dbReference>
<dbReference type="Gene3D" id="2.10.150.10">
    <property type="entry name" value="Urease, beta subunit"/>
    <property type="match status" value="1"/>
</dbReference>
<dbReference type="Gene3D" id="3.30.280.10">
    <property type="entry name" value="Urease, gamma-like subunit"/>
    <property type="match status" value="1"/>
</dbReference>
<dbReference type="HAMAP" id="MF_01954">
    <property type="entry name" value="Urease_beta"/>
    <property type="match status" value="1"/>
</dbReference>
<dbReference type="HAMAP" id="MF_01955">
    <property type="entry name" value="Urease_beta_gamma"/>
    <property type="match status" value="1"/>
</dbReference>
<dbReference type="InterPro" id="IPR002019">
    <property type="entry name" value="Urease_beta-like"/>
</dbReference>
<dbReference type="InterPro" id="IPR036461">
    <property type="entry name" value="Urease_betasu_sf"/>
</dbReference>
<dbReference type="InterPro" id="IPR008223">
    <property type="entry name" value="Urease_gamma-beta_su"/>
</dbReference>
<dbReference type="InterPro" id="IPR002026">
    <property type="entry name" value="Urease_gamma/gamma-beta_su"/>
</dbReference>
<dbReference type="InterPro" id="IPR036463">
    <property type="entry name" value="Urease_gamma_sf"/>
</dbReference>
<dbReference type="InterPro" id="IPR050069">
    <property type="entry name" value="Urease_subunit"/>
</dbReference>
<dbReference type="NCBIfam" id="NF009671">
    <property type="entry name" value="PRK13192.1"/>
    <property type="match status" value="1"/>
</dbReference>
<dbReference type="NCBIfam" id="NF009682">
    <property type="entry name" value="PRK13203.1"/>
    <property type="match status" value="1"/>
</dbReference>
<dbReference type="NCBIfam" id="NF009712">
    <property type="entry name" value="PRK13241.1"/>
    <property type="match status" value="1"/>
</dbReference>
<dbReference type="NCBIfam" id="NF010592">
    <property type="entry name" value="PRK13986.1"/>
    <property type="match status" value="1"/>
</dbReference>
<dbReference type="NCBIfam" id="TIGR00192">
    <property type="entry name" value="urease_beta"/>
    <property type="match status" value="1"/>
</dbReference>
<dbReference type="NCBIfam" id="TIGR00193">
    <property type="entry name" value="urease_gam"/>
    <property type="match status" value="1"/>
</dbReference>
<dbReference type="PANTHER" id="PTHR33569">
    <property type="entry name" value="UREASE"/>
    <property type="match status" value="1"/>
</dbReference>
<dbReference type="PANTHER" id="PTHR33569:SF1">
    <property type="entry name" value="UREASE"/>
    <property type="match status" value="1"/>
</dbReference>
<dbReference type="Pfam" id="PF00699">
    <property type="entry name" value="Urease_beta"/>
    <property type="match status" value="1"/>
</dbReference>
<dbReference type="Pfam" id="PF00547">
    <property type="entry name" value="Urease_gamma"/>
    <property type="match status" value="1"/>
</dbReference>
<dbReference type="PIRSF" id="PIRSF001225">
    <property type="entry name" value="Urease_gammabeta"/>
    <property type="match status" value="1"/>
</dbReference>
<dbReference type="SUPFAM" id="SSF51278">
    <property type="entry name" value="Urease, beta-subunit"/>
    <property type="match status" value="1"/>
</dbReference>
<dbReference type="SUPFAM" id="SSF54111">
    <property type="entry name" value="Urease, gamma-subunit"/>
    <property type="match status" value="1"/>
</dbReference>
<keyword id="KW-0002">3D-structure</keyword>
<keyword id="KW-0963">Cytoplasm</keyword>
<keyword id="KW-0903">Direct protein sequencing</keyword>
<keyword id="KW-0378">Hydrolase</keyword>
<keyword id="KW-1185">Reference proteome</keyword>
<keyword id="KW-0843">Virulence</keyword>
<organism>
    <name type="scientific">Helicobacter pylori (strain ATCC 700392 / 26695)</name>
    <name type="common">Campylobacter pylori</name>
    <dbReference type="NCBI Taxonomy" id="85962"/>
    <lineage>
        <taxon>Bacteria</taxon>
        <taxon>Pseudomonadati</taxon>
        <taxon>Campylobacterota</taxon>
        <taxon>Epsilonproteobacteria</taxon>
        <taxon>Campylobacterales</taxon>
        <taxon>Helicobacteraceae</taxon>
        <taxon>Helicobacter</taxon>
    </lineage>
</organism>
<comment type="function">
    <text evidence="7">Ammonia produced by ureolysis increases the gastric pH thereby providing an environment permissive for colonization of the stomach.</text>
</comment>
<comment type="catalytic activity">
    <reaction evidence="1 5 6">
        <text>urea + 2 H2O + H(+) = hydrogencarbonate + 2 NH4(+)</text>
        <dbReference type="Rhea" id="RHEA:20557"/>
        <dbReference type="ChEBI" id="CHEBI:15377"/>
        <dbReference type="ChEBI" id="CHEBI:15378"/>
        <dbReference type="ChEBI" id="CHEBI:16199"/>
        <dbReference type="ChEBI" id="CHEBI:17544"/>
        <dbReference type="ChEBI" id="CHEBI:28938"/>
        <dbReference type="EC" id="3.5.1.5"/>
    </reaction>
</comment>
<comment type="biophysicochemical properties">
    <kinetics>
        <KM evidence="6">0.48 mM for urea</KM>
        <Vmax evidence="6">1.1 mmol/min/mg enzyme</Vmax>
    </kinetics>
    <phDependence>
        <text evidence="2 6">Optimum pH is 8.0. Active from pH 4.0 to 10.0. In unbuffered solutions, the dodecameric complex is active at pH 3.0.</text>
    </phDependence>
</comment>
<comment type="pathway">
    <text evidence="1">Nitrogen metabolism; urea degradation; CO(2) and NH(3) from urea (urease route): step 1/1.</text>
</comment>
<comment type="subunit">
    <text evidence="1 2">Heterohexamer of 3 UreA (alpha) and 3 UreB (beta) subunits. Four heterohexamers assemble to form a 16 nm dodecameric complex.</text>
</comment>
<comment type="interaction">
    <interactant intactId="EBI-7737170">
        <id>P14916</id>
    </interactant>
    <interactant intactId="EBI-7566591">
        <id>P69996</id>
        <label>ureB</label>
    </interactant>
    <organismsDiffer>false</organismsDiffer>
    <experiments>2</experiments>
</comment>
<comment type="subcellular location">
    <subcellularLocation>
        <location evidence="1 8">Cytoplasm</location>
    </subcellularLocation>
    <text>Also associates with the outer membrane upon autolysis of neighboring bacteria.</text>
</comment>
<comment type="induction">
    <text evidence="3">By nickel ions.</text>
</comment>
<comment type="disruption phenotype">
    <text evidence="4">Cells do not express urease.</text>
</comment>
<comment type="miscellaneous">
    <text>The novel dodecameric structure of the enzyme may allow it to remain active at the cell surface at acidic gastric pH. Within this dodecameric structure the 12 active sites are clustered within the interior of the proteinaceous shell. This may allow a high local concentration of ammonia within the enzyme which may protect the nickel-chelating groups from protonation.</text>
</comment>
<comment type="similarity">
    <text evidence="1">In the N-terminal section; belongs to the urease gamma subunit family.</text>
</comment>
<comment type="similarity">
    <text evidence="1">In the C-terminal section; belongs to the urease beta subunit family.</text>
</comment>
<comment type="caution">
    <text evidence="9">The orthologous protein is known as the gamma/beta subunit (UreAB) in most other bacteria.</text>
</comment>
<comment type="online information" name="Protein Spotlight">
    <link uri="https://www.proteinspotlight.org/back_issues/095"/>
    <text>Going unnoticed - Issue 95 of June 2008</text>
</comment>
<reference key="1">
    <citation type="journal article" date="1990" name="Nucleic Acids Res.">
        <title>Nucleotide sequence of two genes from Helicobacter pylori encoding for urease subunits.</title>
        <authorList>
            <person name="Clayton C.L."/>
            <person name="Pallen M.J."/>
            <person name="Kleanthous H."/>
            <person name="Wren B.W."/>
            <person name="Tabaqchali S."/>
        </authorList>
    </citation>
    <scope>NUCLEOTIDE SEQUENCE [GENOMIC DNA]</scope>
    <source>
        <strain>CPM630</strain>
    </source>
</reference>
<reference key="2">
    <citation type="journal article" date="1991" name="J. Bacteriol.">
        <title>Shuttle cloning and nucleotide sequences of Helicobacter pylori genes responsible for urease activity.</title>
        <authorList>
            <person name="Labigne A."/>
            <person name="Cussac V."/>
            <person name="Courcoux P."/>
        </authorList>
    </citation>
    <scope>NUCLEOTIDE SEQUENCE [GENOMIC DNA]</scope>
    <source>
        <strain>85P</strain>
    </source>
</reference>
<reference key="3">
    <citation type="journal article" date="2000" name="Mol. Microbiol.">
        <title>Identification of the urease operon in Helicobacter pylori and its control by mRNA decay in response to pH.</title>
        <authorList>
            <person name="Akada J.K."/>
            <person name="Shirai M."/>
            <person name="Takeuchi H."/>
            <person name="Tsuda M."/>
            <person name="Nakazawa T."/>
        </authorList>
    </citation>
    <scope>NUCLEOTIDE SEQUENCE [GENOMIC DNA]</scope>
    <source>
        <strain>HPK5</strain>
    </source>
</reference>
<reference key="4">
    <citation type="journal article" date="1997" name="Nature">
        <title>The complete genome sequence of the gastric pathogen Helicobacter pylori.</title>
        <authorList>
            <person name="Tomb J.-F."/>
            <person name="White O."/>
            <person name="Kerlavage A.R."/>
            <person name="Clayton R.A."/>
            <person name="Sutton G.G."/>
            <person name="Fleischmann R.D."/>
            <person name="Ketchum K.A."/>
            <person name="Klenk H.-P."/>
            <person name="Gill S.R."/>
            <person name="Dougherty B.A."/>
            <person name="Nelson K.E."/>
            <person name="Quackenbush J."/>
            <person name="Zhou L."/>
            <person name="Kirkness E.F."/>
            <person name="Peterson S.N."/>
            <person name="Loftus B.J."/>
            <person name="Richardson D.L."/>
            <person name="Dodson R.J."/>
            <person name="Khalak H.G."/>
            <person name="Glodek A."/>
            <person name="McKenney K."/>
            <person name="FitzGerald L.M."/>
            <person name="Lee N."/>
            <person name="Adams M.D."/>
            <person name="Hickey E.K."/>
            <person name="Berg D.E."/>
            <person name="Gocayne J.D."/>
            <person name="Utterback T.R."/>
            <person name="Peterson J.D."/>
            <person name="Kelley J.M."/>
            <person name="Cotton M.D."/>
            <person name="Weidman J.F."/>
            <person name="Fujii C."/>
            <person name="Bowman C."/>
            <person name="Watthey L."/>
            <person name="Wallin E."/>
            <person name="Hayes W.S."/>
            <person name="Borodovsky M."/>
            <person name="Karp P.D."/>
            <person name="Smith H.O."/>
            <person name="Fraser C.M."/>
            <person name="Venter J.C."/>
        </authorList>
    </citation>
    <scope>NUCLEOTIDE SEQUENCE [LARGE SCALE GENOMIC DNA]</scope>
    <source>
        <strain>ATCC 700392 / 26695</strain>
    </source>
</reference>
<reference key="5">
    <citation type="journal article" date="1990" name="Infect. Immun.">
        <title>Purification and N-terminal analysis of urease from Helicobacter pylori.</title>
        <authorList>
            <person name="Hu L.-T."/>
            <person name="Mobley H.L.T."/>
        </authorList>
    </citation>
    <scope>PROTEIN SEQUENCE OF 1-20</scope>
</reference>
<reference key="6">
    <citation type="journal article" date="1990" name="J. Biol. Chem.">
        <title>Purification and characterization of urease from Helicobacter pylori.</title>
        <authorList>
            <person name="Dunn B.E."/>
            <person name="Campbell G.P."/>
            <person name="Perez-Perez G.I."/>
            <person name="Blaser M.J."/>
        </authorList>
    </citation>
    <scope>PROTEIN SEQUENCE OF 1-20</scope>
    <scope>CATALYTIC ACTIVITY</scope>
    <scope>BIOPHYSICOCHEMICAL PROPERTIES</scope>
    <scope>INTERACTION WITH UREB</scope>
</reference>
<reference key="7">
    <citation type="journal article" date="1992" name="Infect. Immun.">
        <title>Purification and characterization of the urease enzymes of Helicobacter species from humans and animals.</title>
        <authorList>
            <person name="Turbett G.R."/>
            <person name="Hoej P.B."/>
            <person name="Horne R."/>
            <person name="Mee B.J."/>
        </authorList>
    </citation>
    <scope>PROTEIN SEQUENCE OF 1-20</scope>
    <source>
        <strain>ATCC 43504 / NCTC 11637 / JCM 7653 / RPH 13487</strain>
    </source>
</reference>
<reference key="8">
    <citation type="journal article" date="1992" name="J. Bacteriol.">
        <title>Expression of Helicobacter pylori urease genes in Escherichia coli grown under nitrogen-limiting conditions.</title>
        <authorList>
            <person name="Cussac V."/>
            <person name="Ferrero R.L."/>
            <person name="Labigne A."/>
        </authorList>
    </citation>
    <scope>DISRUPTION PHENOTYPE</scope>
    <source>
        <strain>85P</strain>
    </source>
</reference>
<reference key="9">
    <citation type="journal article" date="1992" name="Infect. Immun.">
        <title>Purification of recombinant Helicobacter pylori urease apoenzyme encoded by ureA and ureB.</title>
        <authorList>
            <person name="Hu L.-T."/>
            <person name="Foxall P.A."/>
            <person name="Russell R."/>
            <person name="Mobley H.L.T."/>
        </authorList>
    </citation>
    <scope>CATALYTIC ACTIVITY</scope>
</reference>
<reference key="10">
    <citation type="journal article" date="1994" name="Infect. Immun.">
        <title>A urease-negative mutant of Helicobacter pylori constructed by allelic exchange mutagenesis lacks the ability to colonize the nude mouse stomach.</title>
        <authorList>
            <person name="Tsuda M."/>
            <person name="Karita M."/>
            <person name="Morshed M.G."/>
            <person name="Okita K."/>
            <person name="Nakazawa T."/>
        </authorList>
    </citation>
    <scope>FUNCTION</scope>
</reference>
<reference key="11">
    <citation type="journal article" date="1996" name="Infect. Immun.">
        <title>Surface localization of Helicobacter pylori urease and a heat shock protein homolog requires bacterial autolysis.</title>
        <authorList>
            <person name="Phadnis S.H."/>
            <person name="Parlow M.H."/>
            <person name="Levy M."/>
            <person name="Ilver D."/>
            <person name="Caulkins C.M."/>
            <person name="Connors J.B."/>
            <person name="Dunn B.E."/>
        </authorList>
    </citation>
    <scope>SUBCELLULAR LOCATION</scope>
</reference>
<reference key="12">
    <citation type="journal article" date="2001" name="Infect. Immun.">
        <title>Nickel-responsive induction of urease expression in Helicobacter pylori is mediated at the transcriptional level.</title>
        <authorList>
            <person name="van Vliet A.H.M."/>
            <person name="Kuipers E.J."/>
            <person name="Waidner B."/>
            <person name="Davies B.J."/>
            <person name="de Vries N."/>
            <person name="Penn C.W."/>
            <person name="Vandenbroucke-Grauls C.M.J.E."/>
            <person name="Kist M."/>
            <person name="Bereswill S."/>
            <person name="Kusters J.G."/>
        </authorList>
    </citation>
    <scope>INDUCTION</scope>
</reference>
<reference key="13">
    <citation type="journal article" date="2007" name="FEMS Microbiol. Lett.">
        <title>Bacterial factors that mediate colonization of the stomach and virulence of Helicobacter pylori.</title>
        <authorList>
            <person name="Clyne M."/>
            <person name="Dolan B."/>
            <person name="Reeves E.P."/>
        </authorList>
    </citation>
    <scope>REVIEW ON VIRULENCE OF H.PYLORI</scope>
</reference>
<reference key="14">
    <citation type="journal article" date="2001" name="Nat. Struct. Biol.">
        <title>Supramolecular assembly and acid resistance of Helicobacter pylori urease.</title>
        <authorList>
            <person name="Ha N.-C."/>
            <person name="Oh S.-T."/>
            <person name="Sung J.Y."/>
            <person name="Cha K.A."/>
            <person name="Lee M.H."/>
            <person name="Oh B.-H."/>
        </authorList>
    </citation>
    <scope>X-RAY CRYSTALLOGRAPHY (3.0 ANGSTROMS)</scope>
    <scope>SUBUNIT STRUCTURE</scope>
    <scope>PH DEPENDENCE</scope>
</reference>
<feature type="chain" id="PRO_0000098075" description="Urease subunit alpha">
    <location>
        <begin position="1"/>
        <end position="238"/>
    </location>
</feature>
<feature type="region of interest" description="Urease gamma">
    <location>
        <begin position="1"/>
        <end position="102"/>
    </location>
</feature>
<feature type="region of interest" description="Urease beta">
    <location>
        <begin position="103"/>
        <end position="238"/>
    </location>
</feature>
<feature type="sequence conflict" description="In Ref. 5; AA sequence." evidence="9" ref="5">
    <original>H</original>
    <variation>S</variation>
    <location>
        <position position="14"/>
    </location>
</feature>
<feature type="sequence conflict" description="In Ref. 1; CAA34932." evidence="9" ref="1">
    <original>A</original>
    <variation>R</variation>
    <location>
        <position position="37"/>
    </location>
</feature>
<feature type="sequence conflict" description="In Ref. 1; CAA34932." evidence="9" ref="1">
    <original>A</original>
    <variation>R</variation>
    <location>
        <position position="49"/>
    </location>
</feature>
<feature type="sequence conflict" description="In Ref. 1; CAA34932." evidence="9" ref="1">
    <original>KN</original>
    <variation>PP</variation>
    <location>
        <begin position="132"/>
        <end position="133"/>
    </location>
</feature>
<feature type="helix" evidence="10">
    <location>
        <begin position="5"/>
        <end position="25"/>
    </location>
</feature>
<feature type="helix" evidence="10">
    <location>
        <begin position="32"/>
        <end position="49"/>
    </location>
</feature>
<feature type="helix" evidence="10">
    <location>
        <begin position="54"/>
        <end position="60"/>
    </location>
</feature>
<feature type="helix" evidence="10">
    <location>
        <begin position="61"/>
        <end position="63"/>
    </location>
</feature>
<feature type="helix" evidence="10">
    <location>
        <begin position="67"/>
        <end position="69"/>
    </location>
</feature>
<feature type="helix" evidence="10">
    <location>
        <begin position="74"/>
        <end position="77"/>
    </location>
</feature>
<feature type="strand" evidence="10">
    <location>
        <begin position="79"/>
        <end position="87"/>
    </location>
</feature>
<feature type="strand" evidence="10">
    <location>
        <begin position="90"/>
        <end position="97"/>
    </location>
</feature>
<feature type="strand" evidence="10">
    <location>
        <begin position="118"/>
        <end position="121"/>
    </location>
</feature>
<feature type="strand" evidence="10">
    <location>
        <begin position="127"/>
        <end position="133"/>
    </location>
</feature>
<feature type="strand" evidence="10">
    <location>
        <begin position="135"/>
        <end position="137"/>
    </location>
</feature>
<feature type="strand" evidence="10">
    <location>
        <begin position="139"/>
        <end position="142"/>
    </location>
</feature>
<feature type="helix" evidence="10">
    <location>
        <begin position="147"/>
        <end position="149"/>
    </location>
</feature>
<feature type="strand" evidence="10">
    <location>
        <begin position="154"/>
        <end position="156"/>
    </location>
</feature>
<feature type="helix" evidence="10">
    <location>
        <begin position="158"/>
        <end position="161"/>
    </location>
</feature>
<feature type="strand" evidence="10">
    <location>
        <begin position="164"/>
        <end position="166"/>
    </location>
</feature>
<feature type="strand" evidence="10">
    <location>
        <begin position="173"/>
        <end position="176"/>
    </location>
</feature>
<feature type="strand" evidence="10">
    <location>
        <begin position="181"/>
        <end position="188"/>
    </location>
</feature>
<feature type="helix" evidence="10">
    <location>
        <begin position="208"/>
        <end position="220"/>
    </location>
</feature>
<proteinExistence type="evidence at protein level"/>